<feature type="chain" id="PRO_1000132428" description="Glycine cleavage system H protein">
    <location>
        <begin position="1"/>
        <end position="132"/>
    </location>
</feature>
<feature type="domain" description="Lipoyl-binding" evidence="2">
    <location>
        <begin position="24"/>
        <end position="106"/>
    </location>
</feature>
<feature type="modified residue" description="N6-lipoyllysine" evidence="1">
    <location>
        <position position="65"/>
    </location>
</feature>
<accession>B8ZSP0</accession>
<evidence type="ECO:0000255" key="1">
    <source>
        <dbReference type="HAMAP-Rule" id="MF_00272"/>
    </source>
</evidence>
<evidence type="ECO:0000255" key="2">
    <source>
        <dbReference type="PROSITE-ProRule" id="PRU01066"/>
    </source>
</evidence>
<protein>
    <recommendedName>
        <fullName evidence="1">Glycine cleavage system H protein</fullName>
    </recommendedName>
</protein>
<comment type="function">
    <text evidence="1">The glycine cleavage system catalyzes the degradation of glycine. The H protein shuttles the methylamine group of glycine from the P protein to the T protein.</text>
</comment>
<comment type="cofactor">
    <cofactor evidence="1">
        <name>(R)-lipoate</name>
        <dbReference type="ChEBI" id="CHEBI:83088"/>
    </cofactor>
    <text evidence="1">Binds 1 lipoyl cofactor covalently.</text>
</comment>
<comment type="subunit">
    <text evidence="1">The glycine cleavage system is composed of four proteins: P, T, L and H.</text>
</comment>
<comment type="similarity">
    <text evidence="1">Belongs to the GcvH family.</text>
</comment>
<name>GCSH_MYCLB</name>
<dbReference type="EMBL" id="FM211192">
    <property type="protein sequence ID" value="CAR72174.1"/>
    <property type="molecule type" value="Genomic_DNA"/>
</dbReference>
<dbReference type="SMR" id="B8ZSP0"/>
<dbReference type="KEGG" id="mlb:MLBr02077"/>
<dbReference type="HOGENOM" id="CLU_097408_2_0_11"/>
<dbReference type="Proteomes" id="UP000006900">
    <property type="component" value="Chromosome"/>
</dbReference>
<dbReference type="GO" id="GO:0005829">
    <property type="term" value="C:cytosol"/>
    <property type="evidence" value="ECO:0007669"/>
    <property type="project" value="TreeGrafter"/>
</dbReference>
<dbReference type="GO" id="GO:0005960">
    <property type="term" value="C:glycine cleavage complex"/>
    <property type="evidence" value="ECO:0007669"/>
    <property type="project" value="InterPro"/>
</dbReference>
<dbReference type="GO" id="GO:0019464">
    <property type="term" value="P:glycine decarboxylation via glycine cleavage system"/>
    <property type="evidence" value="ECO:0007669"/>
    <property type="project" value="UniProtKB-UniRule"/>
</dbReference>
<dbReference type="CDD" id="cd06848">
    <property type="entry name" value="GCS_H"/>
    <property type="match status" value="1"/>
</dbReference>
<dbReference type="Gene3D" id="2.40.50.100">
    <property type="match status" value="1"/>
</dbReference>
<dbReference type="HAMAP" id="MF_00272">
    <property type="entry name" value="GcvH"/>
    <property type="match status" value="1"/>
</dbReference>
<dbReference type="InterPro" id="IPR003016">
    <property type="entry name" value="2-oxoA_DH_lipoyl-BS"/>
</dbReference>
<dbReference type="InterPro" id="IPR000089">
    <property type="entry name" value="Biotin_lipoyl"/>
</dbReference>
<dbReference type="InterPro" id="IPR002930">
    <property type="entry name" value="GCV_H"/>
</dbReference>
<dbReference type="InterPro" id="IPR033753">
    <property type="entry name" value="GCV_H/Fam206"/>
</dbReference>
<dbReference type="InterPro" id="IPR017453">
    <property type="entry name" value="GCV_H_sub"/>
</dbReference>
<dbReference type="InterPro" id="IPR011053">
    <property type="entry name" value="Single_hybrid_motif"/>
</dbReference>
<dbReference type="NCBIfam" id="TIGR00527">
    <property type="entry name" value="gcvH"/>
    <property type="match status" value="1"/>
</dbReference>
<dbReference type="NCBIfam" id="NF002270">
    <property type="entry name" value="PRK01202.1"/>
    <property type="match status" value="1"/>
</dbReference>
<dbReference type="PANTHER" id="PTHR11715">
    <property type="entry name" value="GLYCINE CLEAVAGE SYSTEM H PROTEIN"/>
    <property type="match status" value="1"/>
</dbReference>
<dbReference type="PANTHER" id="PTHR11715:SF3">
    <property type="entry name" value="GLYCINE CLEAVAGE SYSTEM H PROTEIN-RELATED"/>
    <property type="match status" value="1"/>
</dbReference>
<dbReference type="Pfam" id="PF01597">
    <property type="entry name" value="GCV_H"/>
    <property type="match status" value="1"/>
</dbReference>
<dbReference type="SUPFAM" id="SSF51230">
    <property type="entry name" value="Single hybrid motif"/>
    <property type="match status" value="1"/>
</dbReference>
<dbReference type="PROSITE" id="PS50968">
    <property type="entry name" value="BIOTINYL_LIPOYL"/>
    <property type="match status" value="1"/>
</dbReference>
<dbReference type="PROSITE" id="PS00189">
    <property type="entry name" value="LIPOYL"/>
    <property type="match status" value="1"/>
</dbReference>
<reference key="1">
    <citation type="journal article" date="2009" name="Nat. Genet.">
        <title>Comparative genomic and phylogeographic analysis of Mycobacterium leprae.</title>
        <authorList>
            <person name="Monot M."/>
            <person name="Honore N."/>
            <person name="Garnier T."/>
            <person name="Zidane N."/>
            <person name="Sherafi D."/>
            <person name="Paniz-Mondolfi A."/>
            <person name="Matsuoka M."/>
            <person name="Taylor G.M."/>
            <person name="Donoghue H.D."/>
            <person name="Bouwman A."/>
            <person name="Mays S."/>
            <person name="Watson C."/>
            <person name="Lockwood D."/>
            <person name="Khamispour A."/>
            <person name="Dowlati Y."/>
            <person name="Jianping S."/>
            <person name="Rea T.H."/>
            <person name="Vera-Cabrera L."/>
            <person name="Stefani M.M."/>
            <person name="Banu S."/>
            <person name="Macdonald M."/>
            <person name="Sapkota B.R."/>
            <person name="Spencer J.S."/>
            <person name="Thomas J."/>
            <person name="Harshman K."/>
            <person name="Singh P."/>
            <person name="Busso P."/>
            <person name="Gattiker A."/>
            <person name="Rougemont J."/>
            <person name="Brennan P.J."/>
            <person name="Cole S.T."/>
        </authorList>
    </citation>
    <scope>NUCLEOTIDE SEQUENCE [LARGE SCALE GENOMIC DNA]</scope>
    <source>
        <strain>Br4923</strain>
    </source>
</reference>
<organism>
    <name type="scientific">Mycobacterium leprae (strain Br4923)</name>
    <dbReference type="NCBI Taxonomy" id="561304"/>
    <lineage>
        <taxon>Bacteria</taxon>
        <taxon>Bacillati</taxon>
        <taxon>Actinomycetota</taxon>
        <taxon>Actinomycetes</taxon>
        <taxon>Mycobacteriales</taxon>
        <taxon>Mycobacteriaceae</taxon>
        <taxon>Mycobacterium</taxon>
    </lineage>
</organism>
<sequence length="132" mass="14071">MSDIPSDLHYTAEHEWIRRSREDTVRVGLTDFAQSTLGDVVFVQLPEVGAELAAGKSFGEVESTKSVSDLYAPVSGTVSAVNTDLEGSPQLVNSDPYGAGWLLDVHVSDVGALESAIATLLDAETYRGTLTK</sequence>
<gene>
    <name evidence="1" type="primary">gcvH</name>
    <name type="ordered locus">MLBr02077</name>
</gene>
<keyword id="KW-0450">Lipoyl</keyword>
<proteinExistence type="inferred from homology"/>